<reference key="1">
    <citation type="journal article" date="2005" name="Biochemistry">
        <title>Genetic polymorphism and expression of a highly potent scorpion depressant toxin enable refinement of the effects on insect Na channels and illuminate the key role of Asn-58.</title>
        <authorList>
            <person name="Strugatsky D."/>
            <person name="Zilberberg N."/>
            <person name="Stankiewicz M."/>
            <person name="Ilan N."/>
            <person name="Turkov M."/>
            <person name="Cohen L."/>
            <person name="Pelhate M."/>
            <person name="Gilles N."/>
            <person name="Gordon D."/>
            <person name="Gurevitz M."/>
        </authorList>
    </citation>
    <scope>PROTEIN SEQUENCE</scope>
    <source>
        <tissue>Venom</tissue>
    </source>
</reference>
<keyword id="KW-0027">Amidation</keyword>
<keyword id="KW-0903">Direct protein sequencing</keyword>
<keyword id="KW-1015">Disulfide bond</keyword>
<keyword id="KW-0872">Ion channel impairing toxin</keyword>
<keyword id="KW-0528">Neurotoxin</keyword>
<keyword id="KW-0964">Secreted</keyword>
<keyword id="KW-0732">Signal</keyword>
<keyword id="KW-0800">Toxin</keyword>
<keyword id="KW-0738">Voltage-gated sodium channel impairing toxin</keyword>
<protein>
    <recommendedName>
        <fullName>Beta-insect depressant toxin Lqh-dprIT3e</fullName>
    </recommendedName>
</protein>
<organism>
    <name type="scientific">Leiurus hebraeus</name>
    <name type="common">Hebrew deathstalker scorpion</name>
    <name type="synonym">Leiurus quinquestriatus hebraeus</name>
    <dbReference type="NCBI Taxonomy" id="2899558"/>
    <lineage>
        <taxon>Eukaryota</taxon>
        <taxon>Metazoa</taxon>
        <taxon>Ecdysozoa</taxon>
        <taxon>Arthropoda</taxon>
        <taxon>Chelicerata</taxon>
        <taxon>Arachnida</taxon>
        <taxon>Scorpiones</taxon>
        <taxon>Buthida</taxon>
        <taxon>Buthoidea</taxon>
        <taxon>Buthidae</taxon>
        <taxon>Leiurus</taxon>
    </lineage>
</organism>
<proteinExistence type="evidence at protein level"/>
<evidence type="ECO:0000250" key="1"/>
<evidence type="ECO:0000255" key="2">
    <source>
        <dbReference type="PROSITE-ProRule" id="PRU01210"/>
    </source>
</evidence>
<evidence type="ECO:0000305" key="3"/>
<accession>P0C5I7</accession>
<comment type="function">
    <text>Depressant insect beta-toxins cause a transient contraction paralysis followed by a slow flaccid paralysis. They bind voltage-independently at site-4 of sodium channels (Nav) and block action potentials, primarily by depolarizing the axonal membrane and suppressing the sodium current. This depressant toxin is active only on insects. It is found in a relatively small amount in the venom.</text>
</comment>
<comment type="subcellular location">
    <subcellularLocation>
        <location>Secreted</location>
    </subcellularLocation>
</comment>
<comment type="tissue specificity">
    <text>Expressed by the venom gland.</text>
</comment>
<comment type="domain">
    <text evidence="3">Has the structural arrangement of an alpha-helix connected to antiparallel beta-sheets by disulfide bonds (CS-alpha/beta).</text>
</comment>
<comment type="toxic dose">
    <text>PD(50) is 19 ng/100 mg of body weight of Sarcophaga larvae for contraction paralysis, and 85 ng/100 mg for flaccid paralysis.</text>
</comment>
<comment type="similarity">
    <text evidence="3">Belongs to the long (4 C-C) scorpion toxin superfamily. Sodium channel inhibitor family. Beta subfamily.</text>
</comment>
<name>SIX3E_LEIHE</name>
<feature type="signal peptide">
    <location>
        <begin position="1"/>
        <end position="21"/>
    </location>
</feature>
<feature type="chain" id="PRO_0000307615" description="Beta-insect depressant toxin Lqh-dprIT3e">
    <location>
        <begin position="22"/>
        <end position="82"/>
    </location>
</feature>
<feature type="domain" description="LCN-type CS-alpha/beta" evidence="2">
    <location>
        <begin position="22"/>
        <end position="82"/>
    </location>
</feature>
<feature type="modified residue" description="Glycine amide" evidence="1">
    <location>
        <position position="82"/>
    </location>
</feature>
<feature type="disulfide bond" evidence="2">
    <location>
        <begin position="31"/>
        <end position="81"/>
    </location>
</feature>
<feature type="disulfide bond" evidence="2">
    <location>
        <begin position="35"/>
        <end position="56"/>
    </location>
</feature>
<feature type="disulfide bond" evidence="2">
    <location>
        <begin position="42"/>
        <end position="63"/>
    </location>
</feature>
<feature type="disulfide bond" evidence="2">
    <location>
        <begin position="46"/>
        <end position="65"/>
    </location>
</feature>
<sequence>MKLLLLLTISASMLIEGLVNADGYIRGGDGCKVSCVINHVFCDNECKAAGGSYGYCWAWGLACWCEGLPADREWDYETDTCGGKK</sequence>
<dbReference type="SMR" id="P0C5I7"/>
<dbReference type="GO" id="GO:0005576">
    <property type="term" value="C:extracellular region"/>
    <property type="evidence" value="ECO:0007669"/>
    <property type="project" value="UniProtKB-SubCell"/>
</dbReference>
<dbReference type="GO" id="GO:0019871">
    <property type="term" value="F:sodium channel inhibitor activity"/>
    <property type="evidence" value="ECO:0007669"/>
    <property type="project" value="InterPro"/>
</dbReference>
<dbReference type="GO" id="GO:0090729">
    <property type="term" value="F:toxin activity"/>
    <property type="evidence" value="ECO:0007669"/>
    <property type="project" value="UniProtKB-KW"/>
</dbReference>
<dbReference type="GO" id="GO:0006952">
    <property type="term" value="P:defense response"/>
    <property type="evidence" value="ECO:0007669"/>
    <property type="project" value="InterPro"/>
</dbReference>
<dbReference type="CDD" id="cd23106">
    <property type="entry name" value="neurotoxins_LC_scorpion"/>
    <property type="match status" value="1"/>
</dbReference>
<dbReference type="Gene3D" id="3.30.30.10">
    <property type="entry name" value="Knottin, scorpion toxin-like"/>
    <property type="match status" value="1"/>
</dbReference>
<dbReference type="InterPro" id="IPR044062">
    <property type="entry name" value="LCN-type_CS_alpha_beta_dom"/>
</dbReference>
<dbReference type="InterPro" id="IPR003614">
    <property type="entry name" value="Scorpion_toxin-like"/>
</dbReference>
<dbReference type="InterPro" id="IPR036574">
    <property type="entry name" value="Scorpion_toxin-like_sf"/>
</dbReference>
<dbReference type="InterPro" id="IPR018218">
    <property type="entry name" value="Scorpion_toxinL"/>
</dbReference>
<dbReference type="InterPro" id="IPR002061">
    <property type="entry name" value="Scorpion_toxinL/defensin"/>
</dbReference>
<dbReference type="Pfam" id="PF00537">
    <property type="entry name" value="Toxin_3"/>
    <property type="match status" value="1"/>
</dbReference>
<dbReference type="PRINTS" id="PR00285">
    <property type="entry name" value="SCORPNTOXIN"/>
</dbReference>
<dbReference type="SMART" id="SM00505">
    <property type="entry name" value="Knot1"/>
    <property type="match status" value="1"/>
</dbReference>
<dbReference type="SUPFAM" id="SSF57095">
    <property type="entry name" value="Scorpion toxin-like"/>
    <property type="match status" value="1"/>
</dbReference>
<dbReference type="PROSITE" id="PS51863">
    <property type="entry name" value="LCN_CSAB"/>
    <property type="match status" value="1"/>
</dbReference>